<gene>
    <name type="primary">TK</name>
</gene>
<proteinExistence type="inferred from homology"/>
<name>KITH_CFEPV</name>
<feature type="chain" id="PRO_0000174944" description="Thymidine kinase">
    <location>
        <begin position="1"/>
        <end position="185"/>
    </location>
</feature>
<feature type="active site" description="Proton acceptor" evidence="2">
    <location>
        <position position="85"/>
    </location>
</feature>
<feature type="binding site" evidence="1">
    <location>
        <begin position="8"/>
        <end position="15"/>
    </location>
    <ligand>
        <name>ATP</name>
        <dbReference type="ChEBI" id="CHEBI:30616"/>
    </ligand>
</feature>
<feature type="binding site" evidence="1">
    <location>
        <position position="117"/>
    </location>
    <ligand>
        <name>substrate</name>
    </ligand>
</feature>
<feature type="binding site" evidence="1">
    <location>
        <position position="142"/>
    </location>
    <ligand>
        <name>Zn(2+)</name>
        <dbReference type="ChEBI" id="CHEBI:29105"/>
    </ligand>
</feature>
<feature type="binding site" evidence="1">
    <location>
        <position position="145"/>
    </location>
    <ligand>
        <name>Zn(2+)</name>
        <dbReference type="ChEBI" id="CHEBI:29105"/>
    </ligand>
</feature>
<feature type="binding site" evidence="1">
    <location>
        <begin position="161"/>
        <end position="165"/>
    </location>
    <ligand>
        <name>substrate</name>
    </ligand>
</feature>
<feature type="binding site" evidence="1">
    <location>
        <position position="174"/>
    </location>
    <ligand>
        <name>Zn(2+)</name>
        <dbReference type="ChEBI" id="CHEBI:29105"/>
    </ligand>
</feature>
<feature type="binding site" evidence="1">
    <location>
        <position position="177"/>
    </location>
    <ligand>
        <name>Zn(2+)</name>
        <dbReference type="ChEBI" id="CHEBI:29105"/>
    </ligand>
</feature>
<organism>
    <name type="scientific">Choristoneura fumiferana entomopoxvirus</name>
    <name type="common">CfEPV</name>
    <dbReference type="NCBI Taxonomy" id="28322"/>
    <lineage>
        <taxon>Viruses</taxon>
        <taxon>Varidnaviria</taxon>
        <taxon>Bamfordvirae</taxon>
        <taxon>Nucleocytoviricota</taxon>
        <taxon>Pokkesviricetes</taxon>
        <taxon>Chitovirales</taxon>
        <taxon>Poxviridae</taxon>
        <taxon>Entomopoxvirinae</taxon>
        <taxon>Betaentomopoxvirus</taxon>
    </lineage>
</organism>
<organismHost>
    <name type="scientific">Choristoneura fumiferana</name>
    <name type="common">Spruce budworm moth</name>
    <name type="synonym">Archips fumiferana</name>
    <dbReference type="NCBI Taxonomy" id="7141"/>
</organismHost>
<dbReference type="EC" id="2.7.1.21"/>
<dbReference type="EMBL" id="D10681">
    <property type="protein sequence ID" value="BAA01527.1"/>
    <property type="molecule type" value="Genomic_DNA"/>
</dbReference>
<dbReference type="PIR" id="JQ1923">
    <property type="entry name" value="JQ1923"/>
</dbReference>
<dbReference type="SMR" id="Q05880"/>
<dbReference type="GO" id="GO:0005524">
    <property type="term" value="F:ATP binding"/>
    <property type="evidence" value="ECO:0007669"/>
    <property type="project" value="UniProtKB-KW"/>
</dbReference>
<dbReference type="GO" id="GO:0046872">
    <property type="term" value="F:metal ion binding"/>
    <property type="evidence" value="ECO:0007669"/>
    <property type="project" value="UniProtKB-KW"/>
</dbReference>
<dbReference type="GO" id="GO:0004797">
    <property type="term" value="F:thymidine kinase activity"/>
    <property type="evidence" value="ECO:0007669"/>
    <property type="project" value="UniProtKB-EC"/>
</dbReference>
<dbReference type="GO" id="GO:0071897">
    <property type="term" value="P:DNA biosynthetic process"/>
    <property type="evidence" value="ECO:0007669"/>
    <property type="project" value="UniProtKB-KW"/>
</dbReference>
<dbReference type="GO" id="GO:0046104">
    <property type="term" value="P:thymidine metabolic process"/>
    <property type="evidence" value="ECO:0007669"/>
    <property type="project" value="TreeGrafter"/>
</dbReference>
<dbReference type="FunFam" id="3.40.50.300:FF:000948">
    <property type="entry name" value="Thymidine kinase"/>
    <property type="match status" value="1"/>
</dbReference>
<dbReference type="Gene3D" id="3.30.60.20">
    <property type="match status" value="1"/>
</dbReference>
<dbReference type="Gene3D" id="3.40.50.300">
    <property type="entry name" value="P-loop containing nucleotide triphosphate hydrolases"/>
    <property type="match status" value="1"/>
</dbReference>
<dbReference type="InterPro" id="IPR027417">
    <property type="entry name" value="P-loop_NTPase"/>
</dbReference>
<dbReference type="InterPro" id="IPR001267">
    <property type="entry name" value="Thymidine_kinase"/>
</dbReference>
<dbReference type="InterPro" id="IPR020633">
    <property type="entry name" value="Thymidine_kinase_CS"/>
</dbReference>
<dbReference type="PANTHER" id="PTHR11441">
    <property type="entry name" value="THYMIDINE KINASE"/>
    <property type="match status" value="1"/>
</dbReference>
<dbReference type="PANTHER" id="PTHR11441:SF0">
    <property type="entry name" value="THYMIDINE KINASE, CYTOSOLIC"/>
    <property type="match status" value="1"/>
</dbReference>
<dbReference type="Pfam" id="PF00265">
    <property type="entry name" value="TK"/>
    <property type="match status" value="1"/>
</dbReference>
<dbReference type="PIRSF" id="PIRSF035805">
    <property type="entry name" value="TK_cell"/>
    <property type="match status" value="1"/>
</dbReference>
<dbReference type="SUPFAM" id="SSF57716">
    <property type="entry name" value="Glucocorticoid receptor-like (DNA-binding domain)"/>
    <property type="match status" value="1"/>
</dbReference>
<dbReference type="SUPFAM" id="SSF52540">
    <property type="entry name" value="P-loop containing nucleoside triphosphate hydrolases"/>
    <property type="match status" value="1"/>
</dbReference>
<dbReference type="PROSITE" id="PS00603">
    <property type="entry name" value="TK_CELLULAR_TYPE"/>
    <property type="match status" value="1"/>
</dbReference>
<protein>
    <recommendedName>
        <fullName>Thymidine kinase</fullName>
        <ecNumber>2.7.1.21</ecNumber>
    </recommendedName>
</protein>
<evidence type="ECO:0000250" key="1"/>
<evidence type="ECO:0000255" key="2"/>
<evidence type="ECO:0000305" key="3"/>
<accession>Q05880</accession>
<sequence>MSIEIITGPMYSGKTTELIRRITRYKLCKKNCVIISHSIDNRHDDDNILINHDGFKISHDDFIKTNILINKIKIFDKYEIIGIDECQFFDSNDLIIFCDTLANNGKKIIVAGLNSDFNKNPFKSIIKLIPISEKITKLQSICNFCYNDATFTMKKFNKDIIIEIGGSDLYIPVCRICYNENNTIN</sequence>
<keyword id="KW-0067">ATP-binding</keyword>
<keyword id="KW-0237">DNA synthesis</keyword>
<keyword id="KW-0418">Kinase</keyword>
<keyword id="KW-0479">Metal-binding</keyword>
<keyword id="KW-0547">Nucleotide-binding</keyword>
<keyword id="KW-0808">Transferase</keyword>
<keyword id="KW-0862">Zinc</keyword>
<comment type="catalytic activity">
    <reaction>
        <text>thymidine + ATP = dTMP + ADP + H(+)</text>
        <dbReference type="Rhea" id="RHEA:19129"/>
        <dbReference type="ChEBI" id="CHEBI:15378"/>
        <dbReference type="ChEBI" id="CHEBI:17748"/>
        <dbReference type="ChEBI" id="CHEBI:30616"/>
        <dbReference type="ChEBI" id="CHEBI:63528"/>
        <dbReference type="ChEBI" id="CHEBI:456216"/>
        <dbReference type="EC" id="2.7.1.21"/>
    </reaction>
</comment>
<comment type="similarity">
    <text evidence="3">Belongs to the thymidine kinase family.</text>
</comment>
<reference key="1">
    <citation type="journal article" date="1992" name="J. Gen. Virol.">
        <title>Comparison of the thymidine kinase genes from three entomopoxviruses.</title>
        <authorList>
            <person name="Lytvyn V."/>
            <person name="Fortin Y."/>
            <person name="Banville M."/>
            <person name="Arif B."/>
            <person name="Richardson C."/>
        </authorList>
    </citation>
    <scope>NUCLEOTIDE SEQUENCE [GENOMIC DNA]</scope>
</reference>